<accession>Q79668</accession>
<keyword id="KW-0010">Activator</keyword>
<keyword id="KW-0014">AIDS</keyword>
<keyword id="KW-0053">Apoptosis</keyword>
<keyword id="KW-0131">Cell cycle</keyword>
<keyword id="KW-1079">Host G2/M cell cycle arrest by virus</keyword>
<keyword id="KW-1048">Host nucleus</keyword>
<keyword id="KW-0945">Host-virus interaction</keyword>
<keyword id="KW-0407">Ion channel</keyword>
<keyword id="KW-0406">Ion transport</keyword>
<keyword id="KW-1121">Modulation of host cell cycle by virus</keyword>
<keyword id="KW-0597">Phosphoprotein</keyword>
<keyword id="KW-0804">Transcription</keyword>
<keyword id="KW-0805">Transcription regulation</keyword>
<keyword id="KW-0813">Transport</keyword>
<keyword id="KW-1163">Viral penetration into host nucleus</keyword>
<keyword id="KW-0946">Virion</keyword>
<keyword id="KW-1160">Virus entry into host cell</keyword>
<name>VPR_HV1MV</name>
<reference key="1">
    <citation type="journal article" date="1994" name="J. Virol.">
        <title>A new subtype of human immunodeficiency virus type 1 (MVP-5180) from Cameroon.</title>
        <authorList>
            <person name="Gurtler L.G."/>
            <person name="Hauser P.H."/>
            <person name="Eberle J."/>
            <person name="von Brunn A."/>
            <person name="Knapp S."/>
            <person name="Zekeng L."/>
            <person name="Tsague J.M."/>
            <person name="Kaptue L."/>
        </authorList>
    </citation>
    <scope>NUCLEOTIDE SEQUENCE [GENOMIC RNA]</scope>
</reference>
<dbReference type="EMBL" id="L20571">
    <property type="protein sequence ID" value="AAA44862.1"/>
    <property type="molecule type" value="Genomic_RNA"/>
</dbReference>
<dbReference type="SMR" id="Q79668"/>
<dbReference type="Proteomes" id="UP000007698">
    <property type="component" value="Segment"/>
</dbReference>
<dbReference type="GO" id="GO:0043657">
    <property type="term" value="C:host cell"/>
    <property type="evidence" value="ECO:0007669"/>
    <property type="project" value="GOC"/>
</dbReference>
<dbReference type="GO" id="GO:0042025">
    <property type="term" value="C:host cell nucleus"/>
    <property type="evidence" value="ECO:0007669"/>
    <property type="project" value="UniProtKB-SubCell"/>
</dbReference>
<dbReference type="GO" id="GO:0043655">
    <property type="term" value="C:host extracellular space"/>
    <property type="evidence" value="ECO:0007669"/>
    <property type="project" value="UniProtKB-SubCell"/>
</dbReference>
<dbReference type="GO" id="GO:0044423">
    <property type="term" value="C:virion component"/>
    <property type="evidence" value="ECO:0007669"/>
    <property type="project" value="UniProtKB-UniRule"/>
</dbReference>
<dbReference type="GO" id="GO:0006351">
    <property type="term" value="P:DNA-templated transcription"/>
    <property type="evidence" value="ECO:0007669"/>
    <property type="project" value="UniProtKB-UniRule"/>
</dbReference>
<dbReference type="GO" id="GO:0034220">
    <property type="term" value="P:monoatomic ion transmembrane transport"/>
    <property type="evidence" value="ECO:0007669"/>
    <property type="project" value="UniProtKB-KW"/>
</dbReference>
<dbReference type="GO" id="GO:0051260">
    <property type="term" value="P:protein homooligomerization"/>
    <property type="evidence" value="ECO:0007669"/>
    <property type="project" value="UniProtKB-UniRule"/>
</dbReference>
<dbReference type="GO" id="GO:0006355">
    <property type="term" value="P:regulation of DNA-templated transcription"/>
    <property type="evidence" value="ECO:0007669"/>
    <property type="project" value="UniProtKB-UniRule"/>
</dbReference>
<dbReference type="GO" id="GO:0046718">
    <property type="term" value="P:symbiont entry into host cell"/>
    <property type="evidence" value="ECO:0007669"/>
    <property type="project" value="UniProtKB-KW"/>
</dbReference>
<dbReference type="GO" id="GO:0052151">
    <property type="term" value="P:symbiont-mediated activation of host apoptosis"/>
    <property type="evidence" value="ECO:0007669"/>
    <property type="project" value="UniProtKB-UniRule"/>
</dbReference>
<dbReference type="GO" id="GO:0039592">
    <property type="term" value="P:symbiont-mediated arrest of host cell cycle during G2/M transition"/>
    <property type="evidence" value="ECO:0007669"/>
    <property type="project" value="UniProtKB-UniRule"/>
</dbReference>
<dbReference type="GO" id="GO:0075732">
    <property type="term" value="P:viral penetration into host nucleus"/>
    <property type="evidence" value="ECO:0007669"/>
    <property type="project" value="UniProtKB-UniRule"/>
</dbReference>
<dbReference type="Gene3D" id="6.10.210.10">
    <property type="match status" value="1"/>
</dbReference>
<dbReference type="Gene3D" id="1.20.5.90">
    <property type="entry name" value="VpR/VpX protein, C-terminal domain"/>
    <property type="match status" value="1"/>
</dbReference>
<dbReference type="HAMAP" id="MF_04080">
    <property type="entry name" value="HIV_VPR"/>
    <property type="match status" value="1"/>
</dbReference>
<dbReference type="InterPro" id="IPR000012">
    <property type="entry name" value="RetroV_VpR/X"/>
</dbReference>
<dbReference type="Pfam" id="PF00522">
    <property type="entry name" value="VPR"/>
    <property type="match status" value="1"/>
</dbReference>
<dbReference type="PRINTS" id="PR00444">
    <property type="entry name" value="HIVVPRVPX"/>
</dbReference>
<evidence type="ECO:0000255" key="1">
    <source>
        <dbReference type="HAMAP-Rule" id="MF_04080"/>
    </source>
</evidence>
<feature type="chain" id="PRO_0000246761" description="Protein Vpr">
    <location>
        <begin position="1"/>
        <end position="100"/>
    </location>
</feature>
<feature type="region of interest" description="Homooligomerization" evidence="1">
    <location>
        <begin position="1"/>
        <end position="42"/>
    </location>
</feature>
<feature type="modified residue" description="Phosphoserine; by host" evidence="1">
    <location>
        <position position="79"/>
    </location>
</feature>
<feature type="modified residue" description="Phosphoserine; by host" evidence="1">
    <location>
        <position position="98"/>
    </location>
</feature>
<feature type="modified residue" description="Phosphoserine; by host" evidence="1">
    <location>
        <position position="100"/>
    </location>
</feature>
<protein>
    <recommendedName>
        <fullName evidence="1">Protein Vpr</fullName>
    </recommendedName>
    <alternativeName>
        <fullName evidence="1">R ORF protein</fullName>
    </alternativeName>
    <alternativeName>
        <fullName evidence="1">Viral protein R</fullName>
    </alternativeName>
</protein>
<sequence>MEQALENQGPAREPFNEWTLELLEELKEEAVRHFPRPWLQACGQYIYETYGDTWEGVMAIIRILQQLLFTHYRIGCQHSRIGILPSNTRGRGRRNGSSRS</sequence>
<gene>
    <name evidence="1" type="primary">vpr</name>
</gene>
<proteinExistence type="inferred from homology"/>
<comment type="function">
    <text evidence="1">During virus replication, may deplete host UNG protein, and incude G2-M cell cycle arrest. Acts by targeting specific host proteins for degradation by the 26S proteasome, through association with the cellular CUL4A-DDB1 E3 ligase complex by direct interaction with host VPRPB/DCAF-1. Cell cycle arrest reportedly occurs within hours of infection and is not blocked by antiviral agents, suggesting that it is initiated by the VPR carried into the virion. Additionally, VPR induces apoptosis in a cell cycle dependent manner suggesting that these two effects are mechanistically linked. Detected in the serum and cerebrospinal fluid of AIDS patient, VPR may also induce cell death to bystander cells.</text>
</comment>
<comment type="function">
    <text evidence="1">During virus entry, plays a role in the transport of the viral pre-integration (PIC) complex to the host nucleus. This function is crucial for viral infection of non-dividing macrophages. May act directly at the nuclear pore complex, by binding nucleoporins phenylalanine-glycine (FG)-repeat regions.</text>
</comment>
<comment type="subunit">
    <text evidence="1">Homooligomer, may form homodimer. Interacts with p6-gag region of the Pr55 Gag precursor protein through a (Leu-X-X)4 motif near the C-terminus of the P6gag protein. Interacts with host UNG. May interact with host RAD23A/HHR23A. Interacts with host VPRBP/DCAF1, leading to hijack the CUL4A-RBX1-DDB1-DCAF1/VPRBP complex, mediating ubiquitination of host proteins such as TERT and ZGPAT and arrest of the cell cycle in G2 phase.</text>
</comment>
<comment type="subcellular location">
    <subcellularLocation>
        <location evidence="1">Virion</location>
    </subcellularLocation>
    <subcellularLocation>
        <location evidence="1">Host nucleus</location>
    </subcellularLocation>
    <subcellularLocation>
        <location evidence="1">Host extracellular space</location>
    </subcellularLocation>
    <text evidence="1">Incorporation into virion is dependent on p6 GAG sequences. Lacks a canonical nuclear localization signal, thus import into nucleus may function independently of the human importin pathway. Detected in high quantity in the serum and cerebrospinal fluid of AIDS patient.</text>
</comment>
<comment type="PTM">
    <text evidence="1">Phosphorylated on several residues by host. These phosphorylations regulate VPR activity for the nuclear import of the HIV-1 pre-integration complex.</text>
</comment>
<comment type="miscellaneous">
    <text evidence="1">HIV-1 lineages are divided in three main groups, M (for Major), O (for Outlier), and N (for New, or Non-M, Non-O). The vast majority of strains found worldwide belong to the group M. Group O seems to be endemic to and largely confined to Cameroon and neighboring countries in West Central Africa, where these viruses represent a small minority of HIV-1 strains. The group N is represented by a limited number of isolates from Cameroonian persons. The group M is further subdivided in 9 clades or subtypes (A to D, F to H, J and K).</text>
</comment>
<comment type="similarity">
    <text evidence="1">Belongs to the HIV-1 VPR protein family.</text>
</comment>
<organism>
    <name type="scientific">Human immunodeficiency virus type 1 group O (isolate MVP5180)</name>
    <name type="common">HIV-1</name>
    <dbReference type="NCBI Taxonomy" id="388816"/>
    <lineage>
        <taxon>Viruses</taxon>
        <taxon>Riboviria</taxon>
        <taxon>Pararnavirae</taxon>
        <taxon>Artverviricota</taxon>
        <taxon>Revtraviricetes</taxon>
        <taxon>Ortervirales</taxon>
        <taxon>Retroviridae</taxon>
        <taxon>Orthoretrovirinae</taxon>
        <taxon>Lentivirus</taxon>
        <taxon>Human immunodeficiency virus type 1</taxon>
    </lineage>
</organism>
<organismHost>
    <name type="scientific">Homo sapiens</name>
    <name type="common">Human</name>
    <dbReference type="NCBI Taxonomy" id="9606"/>
</organismHost>